<reference key="1">
    <citation type="submission" date="2006-01" db="EMBL/GenBank/DDBJ databases">
        <title>A comparison of the first two published chloroplast genomes in Asteraceae: Lactuca and Helianthus.</title>
        <authorList>
            <person name="Timme R.E."/>
            <person name="Kuehl J.V."/>
            <person name="Boore J.L."/>
            <person name="Jansen R.K."/>
        </authorList>
    </citation>
    <scope>NUCLEOTIDE SEQUENCE [LARGE SCALE GENOMIC DNA]</scope>
    <source>
        <strain>cv. HA383</strain>
    </source>
</reference>
<dbReference type="EMBL" id="DQ383815">
    <property type="protein sequence ID" value="ABD47193.1"/>
    <property type="molecule type" value="Genomic_DNA"/>
</dbReference>
<dbReference type="RefSeq" id="YP_588165.1">
    <property type="nucleotide sequence ID" value="NC_007977.1"/>
</dbReference>
<dbReference type="GeneID" id="4055573"/>
<dbReference type="KEGG" id="han:4055573"/>
<dbReference type="OrthoDB" id="1680575at2759"/>
<dbReference type="GO" id="GO:0009706">
    <property type="term" value="C:chloroplast inner membrane"/>
    <property type="evidence" value="ECO:0007669"/>
    <property type="project" value="UniProtKB-SubCell"/>
</dbReference>
<dbReference type="GO" id="GO:0015031">
    <property type="term" value="P:protein transport"/>
    <property type="evidence" value="ECO:0007669"/>
    <property type="project" value="UniProtKB-KW"/>
</dbReference>
<dbReference type="InterPro" id="IPR008896">
    <property type="entry name" value="TIC214"/>
</dbReference>
<dbReference type="PANTHER" id="PTHR33163:SF40">
    <property type="entry name" value="PROTEIN TIC 214"/>
    <property type="match status" value="1"/>
</dbReference>
<dbReference type="PANTHER" id="PTHR33163">
    <property type="entry name" value="PROTEIN TIC 214-RELATED"/>
    <property type="match status" value="1"/>
</dbReference>
<dbReference type="Pfam" id="PF05758">
    <property type="entry name" value="Ycf1"/>
    <property type="match status" value="3"/>
</dbReference>
<organism>
    <name type="scientific">Helianthus annuus</name>
    <name type="common">Common sunflower</name>
    <dbReference type="NCBI Taxonomy" id="4232"/>
    <lineage>
        <taxon>Eukaryota</taxon>
        <taxon>Viridiplantae</taxon>
        <taxon>Streptophyta</taxon>
        <taxon>Embryophyta</taxon>
        <taxon>Tracheophyta</taxon>
        <taxon>Spermatophyta</taxon>
        <taxon>Magnoliopsida</taxon>
        <taxon>eudicotyledons</taxon>
        <taxon>Gunneridae</taxon>
        <taxon>Pentapetalae</taxon>
        <taxon>asterids</taxon>
        <taxon>campanulids</taxon>
        <taxon>Asterales</taxon>
        <taxon>Asteraceae</taxon>
        <taxon>Asteroideae</taxon>
        <taxon>Heliantheae alliance</taxon>
        <taxon>Heliantheae</taxon>
        <taxon>Helianthus</taxon>
    </lineage>
</organism>
<proteinExistence type="inferred from homology"/>
<keyword id="KW-0150">Chloroplast</keyword>
<keyword id="KW-0472">Membrane</keyword>
<keyword id="KW-0934">Plastid</keyword>
<keyword id="KW-1001">Plastid inner membrane</keyword>
<keyword id="KW-0653">Protein transport</keyword>
<keyword id="KW-0812">Transmembrane</keyword>
<keyword id="KW-1133">Transmembrane helix</keyword>
<keyword id="KW-0813">Transport</keyword>
<feature type="chain" id="PRO_0000262610" description="Protein TIC 214">
    <location>
        <begin position="1"/>
        <end position="1705"/>
    </location>
</feature>
<feature type="transmembrane region" description="Helical" evidence="2">
    <location>
        <begin position="18"/>
        <end position="38"/>
    </location>
</feature>
<feature type="transmembrane region" description="Helical" evidence="2">
    <location>
        <begin position="67"/>
        <end position="87"/>
    </location>
</feature>
<feature type="transmembrane region" description="Helical" evidence="2">
    <location>
        <begin position="127"/>
        <end position="147"/>
    </location>
</feature>
<feature type="transmembrane region" description="Helical" evidence="2">
    <location>
        <begin position="175"/>
        <end position="195"/>
    </location>
</feature>
<feature type="transmembrane region" description="Helical" evidence="2">
    <location>
        <begin position="218"/>
        <end position="238"/>
    </location>
</feature>
<geneLocation type="chloroplast"/>
<comment type="function">
    <text evidence="1">Involved in protein precursor import into chloroplasts. May be part of an intermediate translocation complex acting as a protein-conducting channel at the inner envelope.</text>
</comment>
<comment type="subunit">
    <text evidence="1">Part of the Tic complex.</text>
</comment>
<comment type="subcellular location">
    <subcellularLocation>
        <location evidence="1">Plastid</location>
        <location evidence="1">Chloroplast inner membrane</location>
        <topology evidence="2">Multi-pass membrane protein</topology>
    </subcellularLocation>
</comment>
<comment type="similarity">
    <text evidence="3">Belongs to the TIC214 family.</text>
</comment>
<accession>Q1KXR1</accession>
<gene>
    <name evidence="1" type="primary">TIC214</name>
    <name type="synonym">ycf1</name>
</gene>
<name>TI214_HELAN</name>
<protein>
    <recommendedName>
        <fullName evidence="1">Protein TIC 214</fullName>
    </recommendedName>
    <alternativeName>
        <fullName evidence="1">Translocon at the inner envelope membrane of chloroplasts 214</fullName>
        <shortName evidence="1">AtTIC214</shortName>
    </alternativeName>
</protein>
<sequence length="1705" mass="204788">MILKSFLLGNLVSLCMKIINSVVVVGLYYGFLTTFSIGPSYLFLLRAHVMEEGEEGAEKKVSATTGFITGQLIMFISIYYAPLHLALGRPHTITVLALPYLLFHFFCNSKKNFLDYGSTTRNSMRNLSIQCVFLNNLIFQLLNHFILPSSMLARLVNIFMFRCNSKMLFVTSSFVGWIIGHILFMKWVGLLLVWIRQNRSIRKYIQANKYLVLELKNSMSMAGIFSIFLLVTCVHYLGRIPSPIFSTKLNMLEKMEEEEEFDNNEEEEFDNNEEEEFDNNKTVDYMYGNQENLKFKILEKKQKDEEKNFFLFEKPILTFFFDYNRWNRPLRYIRKINKKLKGSVRKEASQYFFYTCQSDGKQRISFTYPPSLSTFGEMIARRISLSTLEKISPDELYTEWVFTNKEKKNNLNNEFINRIEALETVFLSLNILEAKTRLSNAETKNKNNCLVKMYDPFLNGMYRGRMKKLFSSSIINETSIENCTETAELNKIHDILLPYPNSPENEQKIERSEKKKRKIDSNNGLKFSLNEILTNPKREKKYIGINEIGKKPPRWSYKLINELEQYFKKRRKEQGIMQGLDHQLRTRKFKHIAFLTRSERSFKKSHFKNYNLYRKFNRDSGFISYLEEPDFRRAVIKDSMRVQRRKMVIWGPSQGNPHSPLFLEKMEDFPFPISDLMKLFFNIRDWLGKKSEFEILDQQFQIKKNNQEDVIEFWENIPYAQKSRSVLLLAQSIFRRYIKLPLLIIAKNIGRILLRQSPEWYEDFQDWNREIYLKCNYNGLQFSKTEFPKNWLIEGFQIKILYPFHLKPWHRSKLRLSDRDRKQQDDFDSCFLTVLGMETEYPFGPPRKTPSFFEPIFKDIDYKVEIRKFNFRIRRALKKIKKKEAKVFFFVKQILKELLKGKKIPLFITREIYESNETEREKDSIISNKIIHESLSQNRPKGLTNYSQTEEEMKHRIDRRNTIRNQIEIMKKNKKTVTLKKKINKKNNGEALPTIWKILKRNNIELIVKIFIEKIYIDIFLCIINMRRIALQLFMESTKKIIEKYIDNNETNKEKINKTKQNQIDFISTRTIKKAFDNLRNSKRKSNIFFELSYLSQKYVFLKLSQTQVIHFNKLRSILQYNGPSFFLKNEIKDFFGRQGIFDYEVRHKKLPNSGMNPWKNWLRGHYQYDLSQITWSRLVPQKWRNGKNQCQPSQNKDLNKWYSYEKDQLFDYKKKQNLKVYLLSNKEENFQKNYRYDRLSYKYIHSETNKKSYIYRSSLEPNKKQENSTRNKEKTVNILKNIPIKNYLGKSDIIYMEKNTDRKYLGWKLNTNIQVESNKDQIQIRDKIPNNGLFYLPIYSNSEINYKRVFFDWMGMPFDWMGMNEKFLILNRPISNPKFFLFPEFLILYHKYKEKPWFIPSNLLLFNLNINPNFSENQNIKGKHEEDEDFFNFSPSNSKQYFELKNQNNIEESLLESIEKLQILIKGDFPLQLRWTGRLNQLNQKMMNNIQIYGLLVSLINVRKISISYIQRKEMNLDIMRRRLNLTQLTKKGILIMEPARLSVKNDGQFFMYQIIGISLVHKSKHQSNQRYRNPQNVAKNHFDESIPRHKTLNRDKKNSDLLVPEKILSSRRRRELRILISFNLKNQNNVHRKKFFCKENKIKNWSQFLDESENFDRKKNELIKLKFFFWPNYRLEDLACMNRYWFDTNNGSRFSMLRIYMYP</sequence>
<evidence type="ECO:0000250" key="1">
    <source>
        <dbReference type="UniProtKB" id="P56785"/>
    </source>
</evidence>
<evidence type="ECO:0000255" key="2"/>
<evidence type="ECO:0000305" key="3"/>